<evidence type="ECO:0000255" key="1"/>
<evidence type="ECO:0000305" key="2"/>
<keyword id="KW-0472">Membrane</keyword>
<keyword id="KW-1185">Reference proteome</keyword>
<keyword id="KW-0812">Transmembrane</keyword>
<keyword id="KW-1133">Transmembrane helix</keyword>
<accession>O62266</accession>
<name>SRE31_CAEEL</name>
<sequence>MIIKNTGTSTFIWLPVYFYNEPLNLKLVISIFELLSYILCGYILNLSIYVMSKIQLFHKNLMFLTVPLFAIWYELIIGKFITIAYRLKIVNPGVELGEHTVFWTNDPDKILEVGGSSGLELLIFGGFLQWHTIYSIVFGILAVATERTIASVYIKDYESKKRIWIPIFLIIICQVLAIFMTFIVINRKVHPIIARLPFIFLCPISFAVWLFVKNKNKTLQKEIQNPKRTRIFTLSQQCQVKENLRALRLGTRLVAVVLVYIMVCFLGIVSLTFDLIPGVCGHFVENFLFFHPIPICLTAMFSIPRWKTEFEKSYLPWKYRRNLRKIRQMSMEIEEDSIKKISLETDLYFKQLAESWI</sequence>
<organism>
    <name type="scientific">Caenorhabditis elegans</name>
    <dbReference type="NCBI Taxonomy" id="6239"/>
    <lineage>
        <taxon>Eukaryota</taxon>
        <taxon>Metazoa</taxon>
        <taxon>Ecdysozoa</taxon>
        <taxon>Nematoda</taxon>
        <taxon>Chromadorea</taxon>
        <taxon>Rhabditida</taxon>
        <taxon>Rhabditina</taxon>
        <taxon>Rhabditomorpha</taxon>
        <taxon>Rhabditoidea</taxon>
        <taxon>Rhabditidae</taxon>
        <taxon>Peloderinae</taxon>
        <taxon>Caenorhabditis</taxon>
    </lineage>
</organism>
<dbReference type="EMBL" id="Z83231">
    <property type="protein sequence ID" value="CAB05749.1"/>
    <property type="molecule type" value="Genomic_DNA"/>
</dbReference>
<dbReference type="PIR" id="T22879">
    <property type="entry name" value="T22879"/>
</dbReference>
<dbReference type="RefSeq" id="NP_496633.1">
    <property type="nucleotide sequence ID" value="NM_064232.2"/>
</dbReference>
<dbReference type="SMR" id="O62266"/>
<dbReference type="FunCoup" id="O62266">
    <property type="interactions" value="9"/>
</dbReference>
<dbReference type="PaxDb" id="6239-F57G9.1"/>
<dbReference type="EnsemblMetazoa" id="F57G9.1.1">
    <property type="protein sequence ID" value="F57G9.1.1"/>
    <property type="gene ID" value="WBGene00010217"/>
</dbReference>
<dbReference type="GeneID" id="186475"/>
<dbReference type="KEGG" id="cel:CELE_F57G9.1"/>
<dbReference type="UCSC" id="F57G9.1">
    <property type="organism name" value="c. elegans"/>
</dbReference>
<dbReference type="AGR" id="WB:WBGene00010217"/>
<dbReference type="CTD" id="186475"/>
<dbReference type="WormBase" id="F57G9.1">
    <property type="protein sequence ID" value="CE17917"/>
    <property type="gene ID" value="WBGene00010217"/>
    <property type="gene designation" value="sre-31"/>
</dbReference>
<dbReference type="eggNOG" id="ENOG502TFCH">
    <property type="taxonomic scope" value="Eukaryota"/>
</dbReference>
<dbReference type="GeneTree" id="ENSGT01130000278788"/>
<dbReference type="HOGENOM" id="CLU_063305_1_0_1"/>
<dbReference type="InParanoid" id="O62266"/>
<dbReference type="PhylomeDB" id="O62266"/>
<dbReference type="PRO" id="PR:O62266"/>
<dbReference type="Proteomes" id="UP000001940">
    <property type="component" value="Chromosome II"/>
</dbReference>
<dbReference type="GO" id="GO:0016020">
    <property type="term" value="C:membrane"/>
    <property type="evidence" value="ECO:0007669"/>
    <property type="project" value="UniProtKB-SubCell"/>
</dbReference>
<dbReference type="GO" id="GO:0007606">
    <property type="term" value="P:sensory perception of chemical stimulus"/>
    <property type="evidence" value="ECO:0007669"/>
    <property type="project" value="InterPro"/>
</dbReference>
<dbReference type="Gene3D" id="1.20.1070.10">
    <property type="entry name" value="Rhodopsin 7-helix transmembrane proteins"/>
    <property type="match status" value="1"/>
</dbReference>
<dbReference type="InterPro" id="IPR004151">
    <property type="entry name" value="7TM_GPCR_serpentine_rcpt_Sre"/>
</dbReference>
<dbReference type="PANTHER" id="PTHR23128">
    <property type="entry name" value="SERPENTINE RECEPTOR, CLASS E (EPSILON)-RELATED"/>
    <property type="match status" value="1"/>
</dbReference>
<dbReference type="PANTHER" id="PTHR23128:SF60">
    <property type="entry name" value="SERPENTINE RECEPTOR, CLASS E (EPSILON)-RELATED"/>
    <property type="match status" value="1"/>
</dbReference>
<dbReference type="Pfam" id="PF03125">
    <property type="entry name" value="Sre"/>
    <property type="match status" value="1"/>
</dbReference>
<reference key="1">
    <citation type="journal article" date="1998" name="Science">
        <title>Genome sequence of the nematode C. elegans: a platform for investigating biology.</title>
        <authorList>
            <consortium name="The C. elegans sequencing consortium"/>
        </authorList>
    </citation>
    <scope>NUCLEOTIDE SEQUENCE [LARGE SCALE GENOMIC DNA]</scope>
    <source>
        <strain>Bristol N2</strain>
    </source>
</reference>
<protein>
    <recommendedName>
        <fullName>Serpentine receptor class epsilon-31</fullName>
        <shortName>Protein sre-31</shortName>
    </recommendedName>
</protein>
<gene>
    <name type="primary">sre-31</name>
    <name type="ORF">F57G9.1</name>
</gene>
<feature type="chain" id="PRO_0000104545" description="Serpentine receptor class epsilon-31">
    <location>
        <begin position="1"/>
        <end position="357"/>
    </location>
</feature>
<feature type="transmembrane region" description="Helical" evidence="1">
    <location>
        <begin position="28"/>
        <end position="48"/>
    </location>
</feature>
<feature type="transmembrane region" description="Helical" evidence="1">
    <location>
        <begin position="61"/>
        <end position="81"/>
    </location>
</feature>
<feature type="transmembrane region" description="Helical" evidence="1">
    <location>
        <begin position="121"/>
        <end position="141"/>
    </location>
</feature>
<feature type="transmembrane region" description="Helical" evidence="1">
    <location>
        <begin position="165"/>
        <end position="185"/>
    </location>
</feature>
<feature type="transmembrane region" description="Helical" evidence="1">
    <location>
        <begin position="192"/>
        <end position="212"/>
    </location>
</feature>
<feature type="transmembrane region" description="Helical" evidence="1">
    <location>
        <begin position="253"/>
        <end position="273"/>
    </location>
</feature>
<feature type="transmembrane region" description="Helical" evidence="1">
    <location>
        <begin position="283"/>
        <end position="303"/>
    </location>
</feature>
<comment type="subcellular location">
    <subcellularLocation>
        <location evidence="2">Membrane</location>
        <topology evidence="2">Multi-pass membrane protein</topology>
    </subcellularLocation>
</comment>
<comment type="similarity">
    <text evidence="2">Belongs to the nematode receptor-like protein sre family.</text>
</comment>
<proteinExistence type="inferred from homology"/>